<organism>
    <name type="scientific">Arabidopsis thaliana</name>
    <name type="common">Mouse-ear cress</name>
    <dbReference type="NCBI Taxonomy" id="3702"/>
    <lineage>
        <taxon>Eukaryota</taxon>
        <taxon>Viridiplantae</taxon>
        <taxon>Streptophyta</taxon>
        <taxon>Embryophyta</taxon>
        <taxon>Tracheophyta</taxon>
        <taxon>Spermatophyta</taxon>
        <taxon>Magnoliopsida</taxon>
        <taxon>eudicotyledons</taxon>
        <taxon>Gunneridae</taxon>
        <taxon>Pentapetalae</taxon>
        <taxon>rosids</taxon>
        <taxon>malvids</taxon>
        <taxon>Brassicales</taxon>
        <taxon>Brassicaceae</taxon>
        <taxon>Camelineae</taxon>
        <taxon>Arabidopsis</taxon>
    </lineage>
</organism>
<accession>Q9SRH4</accession>
<accession>Q8LGC8</accession>
<protein>
    <recommendedName>
        <fullName>Probable pectate lyase 7</fullName>
        <ecNumber>4.2.2.2</ecNumber>
    </recommendedName>
</protein>
<gene>
    <name type="ordered locus">At3g01270</name>
    <name type="ORF">T22N4.10</name>
    <name type="ORF">T4P13.4</name>
</gene>
<feature type="signal peptide" evidence="2">
    <location>
        <begin position="1"/>
        <end position="24"/>
    </location>
</feature>
<feature type="chain" id="PRO_0000024871" description="Probable pectate lyase 7">
    <location>
        <begin position="25"/>
        <end position="475"/>
    </location>
</feature>
<feature type="region of interest" description="Disordered" evidence="3">
    <location>
        <begin position="91"/>
        <end position="117"/>
    </location>
</feature>
<feature type="active site" evidence="2">
    <location>
        <position position="351"/>
    </location>
</feature>
<feature type="binding site" evidence="1">
    <location>
        <position position="271"/>
    </location>
    <ligand>
        <name>Ca(2+)</name>
        <dbReference type="ChEBI" id="CHEBI:29108"/>
    </ligand>
</feature>
<feature type="binding site" evidence="1">
    <location>
        <position position="295"/>
    </location>
    <ligand>
        <name>Ca(2+)</name>
        <dbReference type="ChEBI" id="CHEBI:29108"/>
    </ligand>
</feature>
<feature type="binding site" evidence="1">
    <location>
        <position position="299"/>
    </location>
    <ligand>
        <name>Ca(2+)</name>
        <dbReference type="ChEBI" id="CHEBI:29108"/>
    </ligand>
</feature>
<feature type="glycosylation site" description="N-linked (GlcNAc...) asparagine" evidence="2">
    <location>
        <position position="67"/>
    </location>
</feature>
<feature type="glycosylation site" description="N-linked (GlcNAc...) asparagine" evidence="2">
    <location>
        <position position="96"/>
    </location>
</feature>
<feature type="sequence conflict" description="In Ref. 3; AAM60924." evidence="4" ref="3">
    <original>D</original>
    <variation>E</variation>
    <location>
        <position position="28"/>
    </location>
</feature>
<feature type="sequence conflict" description="In Ref. 3; AAM60924." evidence="4" ref="3">
    <original>V</original>
    <variation>I</variation>
    <location>
        <position position="80"/>
    </location>
</feature>
<sequence>METARLFKLVCVICIASLIPTIRANVADETDEYWVNKANEARKHTLMAYHPDPYEIVDHFHERHYDNSTDVEGTEEEKAVASEEEDVIEMISSPTNSTRRSLTGRGKGKGKGKWSKLTGPCTASNPIDKCWRCQPDWARRRKKLVHCVRGFGYRTTGGKRGRIYVVTSPRDDDMVNPRPGTLRHAVIQKEPLWIVFKHDMSIRLSQELMITSDKTIDARGANVHIAYGAGITMQYVHNIIIHGLHVHHIVKSSGGLIRDSINHFGHRGEADGDGISIFGATNIWLDHISMSKCQDGLIDAIMGSTAITISNSHFTHHNDVMLLGAQNNNMDDKKMQVTVAYNHFGKGLVQRMPRVRWGFVHVVNNDYTHWELYAIGGSQGPTILSHGNRFIAPPHKQHYREVTKRDYASESEWKNWNWRSEKDVFMNNAYFRQSGNPHFKCSHSRQQMIKPKNGMAVSKLTKYAGALDCRVGKAC</sequence>
<name>PLY7_ARATH</name>
<dbReference type="EC" id="4.2.2.2"/>
<dbReference type="EMBL" id="AC008261">
    <property type="protein sequence ID" value="AAF26147.1"/>
    <property type="molecule type" value="Genomic_DNA"/>
</dbReference>
<dbReference type="EMBL" id="AC010676">
    <property type="protein sequence ID" value="AAF03499.1"/>
    <property type="molecule type" value="Genomic_DNA"/>
</dbReference>
<dbReference type="EMBL" id="CP002686">
    <property type="protein sequence ID" value="AEE73631.1"/>
    <property type="molecule type" value="Genomic_DNA"/>
</dbReference>
<dbReference type="EMBL" id="AY084341">
    <property type="protein sequence ID" value="AAM60924.1"/>
    <property type="molecule type" value="mRNA"/>
</dbReference>
<dbReference type="RefSeq" id="NP_186776.1">
    <property type="nucleotide sequence ID" value="NM_110993.4"/>
</dbReference>
<dbReference type="SMR" id="Q9SRH4"/>
<dbReference type="FunCoup" id="Q9SRH4">
    <property type="interactions" value="108"/>
</dbReference>
<dbReference type="STRING" id="3702.Q9SRH4"/>
<dbReference type="CAZy" id="PL1">
    <property type="family name" value="Polysaccharide Lyase Family 1"/>
</dbReference>
<dbReference type="GlyGen" id="Q9SRH4">
    <property type="glycosylation" value="2 sites"/>
</dbReference>
<dbReference type="PaxDb" id="3702-AT3G01270.1"/>
<dbReference type="ProteomicsDB" id="235048"/>
<dbReference type="EnsemblPlants" id="AT3G01270.1">
    <property type="protein sequence ID" value="AT3G01270.1"/>
    <property type="gene ID" value="AT3G01270"/>
</dbReference>
<dbReference type="GeneID" id="821142"/>
<dbReference type="Gramene" id="AT3G01270.1">
    <property type="protein sequence ID" value="AT3G01270.1"/>
    <property type="gene ID" value="AT3G01270"/>
</dbReference>
<dbReference type="KEGG" id="ath:AT3G01270"/>
<dbReference type="Araport" id="AT3G01270"/>
<dbReference type="TAIR" id="AT3G01270"/>
<dbReference type="eggNOG" id="ENOG502QQE2">
    <property type="taxonomic scope" value="Eukaryota"/>
</dbReference>
<dbReference type="HOGENOM" id="CLU_026608_0_1_1"/>
<dbReference type="InParanoid" id="Q9SRH4"/>
<dbReference type="OMA" id="DKSPHFD"/>
<dbReference type="OrthoDB" id="1637350at2759"/>
<dbReference type="PhylomeDB" id="Q9SRH4"/>
<dbReference type="BioCyc" id="ARA:AT3G01270-MONOMER"/>
<dbReference type="UniPathway" id="UPA00545">
    <property type="reaction ID" value="UER00824"/>
</dbReference>
<dbReference type="PRO" id="PR:Q9SRH4"/>
<dbReference type="Proteomes" id="UP000006548">
    <property type="component" value="Chromosome 3"/>
</dbReference>
<dbReference type="ExpressionAtlas" id="Q9SRH4">
    <property type="expression patterns" value="baseline and differential"/>
</dbReference>
<dbReference type="GO" id="GO:0046872">
    <property type="term" value="F:metal ion binding"/>
    <property type="evidence" value="ECO:0007669"/>
    <property type="project" value="UniProtKB-KW"/>
</dbReference>
<dbReference type="GO" id="GO:0030570">
    <property type="term" value="F:pectate lyase activity"/>
    <property type="evidence" value="ECO:0007669"/>
    <property type="project" value="UniProtKB-EC"/>
</dbReference>
<dbReference type="GO" id="GO:0045490">
    <property type="term" value="P:pectin catabolic process"/>
    <property type="evidence" value="ECO:0007669"/>
    <property type="project" value="UniProtKB-UniPathway"/>
</dbReference>
<dbReference type="Gene3D" id="2.160.20.10">
    <property type="entry name" value="Single-stranded right-handed beta-helix, Pectin lyase-like"/>
    <property type="match status" value="1"/>
</dbReference>
<dbReference type="InterPro" id="IPR018082">
    <property type="entry name" value="AmbAllergen"/>
</dbReference>
<dbReference type="InterPro" id="IPR002022">
    <property type="entry name" value="Pec_lyase"/>
</dbReference>
<dbReference type="InterPro" id="IPR007524">
    <property type="entry name" value="Pec_lyase_N"/>
</dbReference>
<dbReference type="InterPro" id="IPR012334">
    <property type="entry name" value="Pectin_lyas_fold"/>
</dbReference>
<dbReference type="InterPro" id="IPR011050">
    <property type="entry name" value="Pectin_lyase_fold/virulence"/>
</dbReference>
<dbReference type="InterPro" id="IPR045032">
    <property type="entry name" value="PEL"/>
</dbReference>
<dbReference type="PANTHER" id="PTHR31683">
    <property type="entry name" value="PECTATE LYASE 18-RELATED"/>
    <property type="match status" value="1"/>
</dbReference>
<dbReference type="PANTHER" id="PTHR31683:SF69">
    <property type="entry name" value="PECTATE LYASE 7-RELATED"/>
    <property type="match status" value="1"/>
</dbReference>
<dbReference type="Pfam" id="PF04431">
    <property type="entry name" value="Pec_lyase_N"/>
    <property type="match status" value="1"/>
</dbReference>
<dbReference type="Pfam" id="PF00544">
    <property type="entry name" value="Pectate_lyase_4"/>
    <property type="match status" value="1"/>
</dbReference>
<dbReference type="PRINTS" id="PR00807">
    <property type="entry name" value="AMBALLERGEN"/>
</dbReference>
<dbReference type="SMART" id="SM00656">
    <property type="entry name" value="Amb_all"/>
    <property type="match status" value="1"/>
</dbReference>
<dbReference type="SUPFAM" id="SSF51126">
    <property type="entry name" value="Pectin lyase-like"/>
    <property type="match status" value="1"/>
</dbReference>
<proteinExistence type="evidence at transcript level"/>
<reference key="1">
    <citation type="journal article" date="2000" name="Nature">
        <title>Sequence and analysis of chromosome 3 of the plant Arabidopsis thaliana.</title>
        <authorList>
            <person name="Salanoubat M."/>
            <person name="Lemcke K."/>
            <person name="Rieger M."/>
            <person name="Ansorge W."/>
            <person name="Unseld M."/>
            <person name="Fartmann B."/>
            <person name="Valle G."/>
            <person name="Bloecker H."/>
            <person name="Perez-Alonso M."/>
            <person name="Obermaier B."/>
            <person name="Delseny M."/>
            <person name="Boutry M."/>
            <person name="Grivell L.A."/>
            <person name="Mache R."/>
            <person name="Puigdomenech P."/>
            <person name="De Simone V."/>
            <person name="Choisne N."/>
            <person name="Artiguenave F."/>
            <person name="Robert C."/>
            <person name="Brottier P."/>
            <person name="Wincker P."/>
            <person name="Cattolico L."/>
            <person name="Weissenbach J."/>
            <person name="Saurin W."/>
            <person name="Quetier F."/>
            <person name="Schaefer M."/>
            <person name="Mueller-Auer S."/>
            <person name="Gabel C."/>
            <person name="Fuchs M."/>
            <person name="Benes V."/>
            <person name="Wurmbach E."/>
            <person name="Drzonek H."/>
            <person name="Erfle H."/>
            <person name="Jordan N."/>
            <person name="Bangert S."/>
            <person name="Wiedelmann R."/>
            <person name="Kranz H."/>
            <person name="Voss H."/>
            <person name="Holland R."/>
            <person name="Brandt P."/>
            <person name="Nyakatura G."/>
            <person name="Vezzi A."/>
            <person name="D'Angelo M."/>
            <person name="Pallavicini A."/>
            <person name="Toppo S."/>
            <person name="Simionati B."/>
            <person name="Conrad A."/>
            <person name="Hornischer K."/>
            <person name="Kauer G."/>
            <person name="Loehnert T.-H."/>
            <person name="Nordsiek G."/>
            <person name="Reichelt J."/>
            <person name="Scharfe M."/>
            <person name="Schoen O."/>
            <person name="Bargues M."/>
            <person name="Terol J."/>
            <person name="Climent J."/>
            <person name="Navarro P."/>
            <person name="Collado C."/>
            <person name="Perez-Perez A."/>
            <person name="Ottenwaelder B."/>
            <person name="Duchemin D."/>
            <person name="Cooke R."/>
            <person name="Laudie M."/>
            <person name="Berger-Llauro C."/>
            <person name="Purnelle B."/>
            <person name="Masuy D."/>
            <person name="de Haan M."/>
            <person name="Maarse A.C."/>
            <person name="Alcaraz J.-P."/>
            <person name="Cottet A."/>
            <person name="Casacuberta E."/>
            <person name="Monfort A."/>
            <person name="Argiriou A."/>
            <person name="Flores M."/>
            <person name="Liguori R."/>
            <person name="Vitale D."/>
            <person name="Mannhaupt G."/>
            <person name="Haase D."/>
            <person name="Schoof H."/>
            <person name="Rudd S."/>
            <person name="Zaccaria P."/>
            <person name="Mewes H.-W."/>
            <person name="Mayer K.F.X."/>
            <person name="Kaul S."/>
            <person name="Town C.D."/>
            <person name="Koo H.L."/>
            <person name="Tallon L.J."/>
            <person name="Jenkins J."/>
            <person name="Rooney T."/>
            <person name="Rizzo M."/>
            <person name="Walts A."/>
            <person name="Utterback T."/>
            <person name="Fujii C.Y."/>
            <person name="Shea T.P."/>
            <person name="Creasy T.H."/>
            <person name="Haas B."/>
            <person name="Maiti R."/>
            <person name="Wu D."/>
            <person name="Peterson J."/>
            <person name="Van Aken S."/>
            <person name="Pai G."/>
            <person name="Militscher J."/>
            <person name="Sellers P."/>
            <person name="Gill J.E."/>
            <person name="Feldblyum T.V."/>
            <person name="Preuss D."/>
            <person name="Lin X."/>
            <person name="Nierman W.C."/>
            <person name="Salzberg S.L."/>
            <person name="White O."/>
            <person name="Venter J.C."/>
            <person name="Fraser C.M."/>
            <person name="Kaneko T."/>
            <person name="Nakamura Y."/>
            <person name="Sato S."/>
            <person name="Kato T."/>
            <person name="Asamizu E."/>
            <person name="Sasamoto S."/>
            <person name="Kimura T."/>
            <person name="Idesawa K."/>
            <person name="Kawashima K."/>
            <person name="Kishida Y."/>
            <person name="Kiyokawa C."/>
            <person name="Kohara M."/>
            <person name="Matsumoto M."/>
            <person name="Matsuno A."/>
            <person name="Muraki A."/>
            <person name="Nakayama S."/>
            <person name="Nakazaki N."/>
            <person name="Shinpo S."/>
            <person name="Takeuchi C."/>
            <person name="Wada T."/>
            <person name="Watanabe A."/>
            <person name="Yamada M."/>
            <person name="Yasuda M."/>
            <person name="Tabata S."/>
        </authorList>
    </citation>
    <scope>NUCLEOTIDE SEQUENCE [LARGE SCALE GENOMIC DNA]</scope>
    <source>
        <strain>cv. Columbia</strain>
    </source>
</reference>
<reference key="2">
    <citation type="journal article" date="2017" name="Plant J.">
        <title>Araport11: a complete reannotation of the Arabidopsis thaliana reference genome.</title>
        <authorList>
            <person name="Cheng C.Y."/>
            <person name="Krishnakumar V."/>
            <person name="Chan A.P."/>
            <person name="Thibaud-Nissen F."/>
            <person name="Schobel S."/>
            <person name="Town C.D."/>
        </authorList>
    </citation>
    <scope>GENOME REANNOTATION</scope>
    <source>
        <strain>cv. Columbia</strain>
    </source>
</reference>
<reference key="3">
    <citation type="submission" date="2002-03" db="EMBL/GenBank/DDBJ databases">
        <title>Full-length cDNA from Arabidopsis thaliana.</title>
        <authorList>
            <person name="Brover V.V."/>
            <person name="Troukhan M.E."/>
            <person name="Alexandrov N.A."/>
            <person name="Lu Y.-P."/>
            <person name="Flavell R.B."/>
            <person name="Feldmann K.A."/>
        </authorList>
    </citation>
    <scope>NUCLEOTIDE SEQUENCE [LARGE SCALE MRNA]</scope>
</reference>
<keyword id="KW-0106">Calcium</keyword>
<keyword id="KW-0325">Glycoprotein</keyword>
<keyword id="KW-0456">Lyase</keyword>
<keyword id="KW-0479">Metal-binding</keyword>
<keyword id="KW-1185">Reference proteome</keyword>
<keyword id="KW-0732">Signal</keyword>
<comment type="catalytic activity">
    <reaction>
        <text>Eliminative cleavage of (1-&gt;4)-alpha-D-galacturonan to give oligosaccharides with 4-deoxy-alpha-D-galact-4-enuronosyl groups at their non-reducing ends.</text>
        <dbReference type="EC" id="4.2.2.2"/>
    </reaction>
</comment>
<comment type="cofactor">
    <cofactor evidence="1">
        <name>Ca(2+)</name>
        <dbReference type="ChEBI" id="CHEBI:29108"/>
    </cofactor>
    <text evidence="1">Binds 1 Ca(2+) ion. Required for its activity.</text>
</comment>
<comment type="pathway">
    <text>Glycan metabolism; pectin degradation; 2-dehydro-3-deoxy-D-gluconate from pectin: step 2/5.</text>
</comment>
<comment type="similarity">
    <text evidence="4">Belongs to the polysaccharide lyase 1 family.</text>
</comment>
<evidence type="ECO:0000250" key="1"/>
<evidence type="ECO:0000255" key="2"/>
<evidence type="ECO:0000256" key="3">
    <source>
        <dbReference type="SAM" id="MobiDB-lite"/>
    </source>
</evidence>
<evidence type="ECO:0000305" key="4"/>